<gene>
    <name evidence="1" type="primary">LAPTM4B</name>
</gene>
<organism>
    <name type="scientific">Bos taurus</name>
    <name type="common">Bovine</name>
    <dbReference type="NCBI Taxonomy" id="9913"/>
    <lineage>
        <taxon>Eukaryota</taxon>
        <taxon>Metazoa</taxon>
        <taxon>Chordata</taxon>
        <taxon>Craniata</taxon>
        <taxon>Vertebrata</taxon>
        <taxon>Euteleostomi</taxon>
        <taxon>Mammalia</taxon>
        <taxon>Eutheria</taxon>
        <taxon>Laurasiatheria</taxon>
        <taxon>Artiodactyla</taxon>
        <taxon>Ruminantia</taxon>
        <taxon>Pecora</taxon>
        <taxon>Bovidae</taxon>
        <taxon>Bovinae</taxon>
        <taxon>Bos</taxon>
    </lineage>
</organism>
<name>LAP4B_BOVIN</name>
<dbReference type="EMBL" id="AF276819">
    <property type="protein sequence ID" value="AAQ14315.1"/>
    <property type="molecule type" value="mRNA"/>
</dbReference>
<dbReference type="RefSeq" id="NP_991371.1">
    <property type="nucleotide sequence ID" value="NM_205802.1"/>
</dbReference>
<dbReference type="FunCoup" id="Q71SV0">
    <property type="interactions" value="1130"/>
</dbReference>
<dbReference type="STRING" id="9913.ENSBTAP00000022559"/>
<dbReference type="PaxDb" id="9913-ENSBTAP00000022559"/>
<dbReference type="GeneID" id="404155"/>
<dbReference type="KEGG" id="bta:404155"/>
<dbReference type="CTD" id="55353"/>
<dbReference type="eggNOG" id="ENOG502QSAX">
    <property type="taxonomic scope" value="Eukaryota"/>
</dbReference>
<dbReference type="InParanoid" id="Q71SV0"/>
<dbReference type="OrthoDB" id="10002163at2759"/>
<dbReference type="Proteomes" id="UP000009136">
    <property type="component" value="Unplaced"/>
</dbReference>
<dbReference type="GO" id="GO:0042995">
    <property type="term" value="C:cell projection"/>
    <property type="evidence" value="ECO:0000250"/>
    <property type="project" value="UniProtKB"/>
</dbReference>
<dbReference type="GO" id="GO:0005769">
    <property type="term" value="C:early endosome"/>
    <property type="evidence" value="ECO:0000250"/>
    <property type="project" value="UniProtKB"/>
</dbReference>
<dbReference type="GO" id="GO:0005768">
    <property type="term" value="C:endosome"/>
    <property type="evidence" value="ECO:0000250"/>
    <property type="project" value="UniProtKB"/>
</dbReference>
<dbReference type="GO" id="GO:0031902">
    <property type="term" value="C:late endosome membrane"/>
    <property type="evidence" value="ECO:0000250"/>
    <property type="project" value="UniProtKB"/>
</dbReference>
<dbReference type="GO" id="GO:0005765">
    <property type="term" value="C:lysosomal membrane"/>
    <property type="evidence" value="ECO:0000250"/>
    <property type="project" value="UniProtKB"/>
</dbReference>
<dbReference type="GO" id="GO:0005764">
    <property type="term" value="C:lysosome"/>
    <property type="evidence" value="ECO:0000250"/>
    <property type="project" value="UniProtKB"/>
</dbReference>
<dbReference type="GO" id="GO:0032585">
    <property type="term" value="C:multivesicular body membrane"/>
    <property type="evidence" value="ECO:0000250"/>
    <property type="project" value="UniProtKB"/>
</dbReference>
<dbReference type="GO" id="GO:0097487">
    <property type="term" value="C:multivesicular body, internal vesicle"/>
    <property type="evidence" value="ECO:0000250"/>
    <property type="project" value="UniProtKB"/>
</dbReference>
<dbReference type="GO" id="GO:0005886">
    <property type="term" value="C:plasma membrane"/>
    <property type="evidence" value="ECO:0000250"/>
    <property type="project" value="UniProtKB"/>
</dbReference>
<dbReference type="GO" id="GO:0097001">
    <property type="term" value="F:ceramide binding"/>
    <property type="evidence" value="ECO:0000250"/>
    <property type="project" value="UniProtKB"/>
</dbReference>
<dbReference type="GO" id="GO:1902936">
    <property type="term" value="F:phosphatidylinositol bisphosphate binding"/>
    <property type="evidence" value="ECO:0000250"/>
    <property type="project" value="UniProtKB"/>
</dbReference>
<dbReference type="GO" id="GO:0007032">
    <property type="term" value="P:endosome organization"/>
    <property type="evidence" value="ECO:0000250"/>
    <property type="project" value="UniProtKB"/>
</dbReference>
<dbReference type="GO" id="GO:0032509">
    <property type="term" value="P:endosome transport via multivesicular body sorting pathway"/>
    <property type="evidence" value="ECO:0000250"/>
    <property type="project" value="UniProtKB"/>
</dbReference>
<dbReference type="GO" id="GO:1905166">
    <property type="term" value="P:negative regulation of lysosomal protein catabolic process"/>
    <property type="evidence" value="ECO:0000250"/>
    <property type="project" value="UniProtKB"/>
</dbReference>
<dbReference type="GO" id="GO:0032911">
    <property type="term" value="P:negative regulation of transforming growth factor beta1 production"/>
    <property type="evidence" value="ECO:0000250"/>
    <property type="project" value="UniProtKB"/>
</dbReference>
<dbReference type="GO" id="GO:0097213">
    <property type="term" value="P:regulation of lysosomal membrane permeability"/>
    <property type="evidence" value="ECO:0000250"/>
    <property type="project" value="UniProtKB"/>
</dbReference>
<dbReference type="GO" id="GO:1905671">
    <property type="term" value="P:regulation of lysosome organization"/>
    <property type="evidence" value="ECO:0000250"/>
    <property type="project" value="UniProtKB"/>
</dbReference>
<dbReference type="InterPro" id="IPR004687">
    <property type="entry name" value="LAPTM4/5"/>
</dbReference>
<dbReference type="InterPro" id="IPR051115">
    <property type="entry name" value="LAPTM_transporter"/>
</dbReference>
<dbReference type="PANTHER" id="PTHR12479">
    <property type="entry name" value="LYSOSOMAL-ASSOCIATED TRANSMEMBRANE PROTEIN"/>
    <property type="match status" value="1"/>
</dbReference>
<dbReference type="PANTHER" id="PTHR12479:SF6">
    <property type="entry name" value="LYSOSOMAL-ASSOCIATED TRANSMEMBRANE PROTEIN 4B"/>
    <property type="match status" value="1"/>
</dbReference>
<dbReference type="Pfam" id="PF03821">
    <property type="entry name" value="Mtp"/>
    <property type="match status" value="1"/>
</dbReference>
<protein>
    <recommendedName>
        <fullName evidence="1">Lysosomal-associated transmembrane protein 4B</fullName>
    </recommendedName>
</protein>
<feature type="chain" id="PRO_0000249720" description="Lysosomal-associated transmembrane protein 4B">
    <location>
        <begin position="1"/>
        <end position="226"/>
    </location>
</feature>
<feature type="transmembrane region" description="Helical" evidence="2">
    <location>
        <begin position="26"/>
        <end position="46"/>
    </location>
</feature>
<feature type="transmembrane region" description="Helical" evidence="2">
    <location>
        <begin position="72"/>
        <end position="92"/>
    </location>
</feature>
<feature type="transmembrane region" description="Helical" evidence="2">
    <location>
        <begin position="100"/>
        <end position="120"/>
    </location>
</feature>
<feature type="transmembrane region" description="Helical" evidence="2">
    <location>
        <begin position="153"/>
        <end position="173"/>
    </location>
</feature>
<feature type="region of interest" description="Required for NEDD4 interaction" evidence="1">
    <location>
        <begin position="205"/>
        <end position="221"/>
    </location>
</feature>
<evidence type="ECO:0000250" key="1">
    <source>
        <dbReference type="UniProtKB" id="Q86VI4"/>
    </source>
</evidence>
<evidence type="ECO:0000255" key="2"/>
<evidence type="ECO:0000269" key="3">
    <source>
    </source>
</evidence>
<evidence type="ECO:0000305" key="4"/>
<sequence>MKMVAPWTRFYSNSCCLCCHVRTGTILLGVWYLILNAVVLLILLSALADPDHYHFSSSELGGDFEFMDDANMCIAIAISVLMILICAMATYGAYKQRAAWIIPFFCYQIFDFALNTLVAVTVLVYPNSIQEYIRQLPPDFPYKDDIMSVNPTCLVLIILLFISIILAFKGYLISCVWNCYRYINGRNSSDVLVYVTSNDSTVLLPPYDDATVNSATKEPPPPYVSA</sequence>
<proteinExistence type="evidence at protein level"/>
<keyword id="KW-1003">Cell membrane</keyword>
<keyword id="KW-0966">Cell projection</keyword>
<keyword id="KW-0967">Endosome</keyword>
<keyword id="KW-0458">Lysosome</keyword>
<keyword id="KW-0472">Membrane</keyword>
<keyword id="KW-1185">Reference proteome</keyword>
<keyword id="KW-0812">Transmembrane</keyword>
<keyword id="KW-1133">Transmembrane helix</keyword>
<keyword id="KW-0813">Transport</keyword>
<keyword id="KW-0832">Ubl conjugation</keyword>
<comment type="function">
    <text evidence="1">Required for optimal lysosomal function. Blocks EGF-stimulated EGFR intraluminal sorting and degradation. Conversely by binding with the phosphatidylinositol 4,5-bisphosphate, regulates its PIP5K1C interaction, inhibits HGS ubiquitination and relieves LAPTM4B inhibition of EGFR degradation. Recruits SLC3A2 and SLC7A5 (the Leu transporter) to the lysosome, promoting entry of leucine and other essential amino acid (EAA) into the lysosome, stimulating activation of proton-transporting vacuolar (V)-ATPase protein pump (V-ATPase) and hence mTORC1 activation. Plays a role as negative regulator of TGFB1 production in regulatory T cells. Binds ceramide and facilitates its exit from late endosome in order to control cell death pathways.</text>
</comment>
<comment type="subunit">
    <text evidence="1">Homooligomer; upon reaching the lysosomes. Interacts with MCOLN1. Interacts with NEDD4; may play a role in the lysosomal sorting of LAPTM4B; enhances HGS association with NEDD4; mediates inhibition of EGFR degradation. Interacts with PIP5K1C; promotes SNX5 association with LAPTM4B; kinase activity of PIP5K1C is required; interaction is regulated by phosphatidylinositol 4,5-bisphosphate generated by PIP5K1C. Interacts with HGS; promotes HGS ubiquitination. Interacts with SNX5. Interacts with SLC3A2 and SLC7A5; recruits SLC3A2 and SLC7A5 to lysosomes to promote leucine uptake into these organelles and is required for mTORC1 activation. Interacts with LRRC32; decreases TGFB1 production in regulatory T cells. Interacts with BECN1; competes with EGFR for LAPTM4B binding; regulates EGFR activity. Interacts with EGFR; positively correlates with EGFR activation.</text>
</comment>
<comment type="subcellular location">
    <subcellularLocation>
        <location evidence="1">Endomembrane system</location>
        <topology evidence="1">Multi-pass membrane protein</topology>
    </subcellularLocation>
    <subcellularLocation>
        <location evidence="1">Late endosome membrane</location>
    </subcellularLocation>
    <subcellularLocation>
        <location evidence="1">Cell membrane</location>
    </subcellularLocation>
    <subcellularLocation>
        <location evidence="1">Cell projection</location>
    </subcellularLocation>
    <subcellularLocation>
        <location evidence="1">Lysosome membrane</location>
    </subcellularLocation>
    <subcellularLocation>
        <location evidence="1">Endosome membrane</location>
    </subcellularLocation>
    <subcellularLocation>
        <location evidence="1">Endosome</location>
        <location evidence="1">Multivesicular body membrane</location>
    </subcellularLocation>
    <subcellularLocation>
        <location evidence="1">Endosome</location>
        <location evidence="1">Multivesicular body lumen</location>
    </subcellularLocation>
</comment>
<comment type="tissue specificity">
    <text evidence="3">Strongly expressed in fetal ovary, testis, adrenal gland, liver and uterus, and weakly expressed in the spleen.</text>
</comment>
<comment type="PTM">
    <text evidence="1">Undergoes proteolytic cleavage following delivery to the lysosomes.</text>
</comment>
<comment type="PTM">
    <text evidence="3">Ubiquitinated by NEDD4.</text>
</comment>
<comment type="similarity">
    <text evidence="4">Belongs to the LAPTM4/LAPTM5 transporter family.</text>
</comment>
<accession>Q71SV0</accession>
<reference key="1">
    <citation type="journal article" date="2015" name="J. Ovarian Res.">
        <title>Differential expression of lysosome-associated protein transmembrane-4 beta (LAPTM4B) in granulosa cells of ovarian follicles and in other bovine tissues.</title>
        <authorList>
            <person name="Ndiaye K."/>
            <person name="Carriere P.D."/>
            <person name="Sirois J."/>
            <person name="Silversides D.W."/>
            <person name="Lussier J.G."/>
        </authorList>
    </citation>
    <scope>NUCLEOTIDE SEQUENCE [MRNA]</scope>
    <scope>TISSUE SPECIFICITY</scope>
    <scope>UBIQUITINATION</scope>
</reference>